<evidence type="ECO:0000250" key="1">
    <source>
        <dbReference type="UniProtKB" id="O59952"/>
    </source>
</evidence>
<evidence type="ECO:0000255" key="2"/>
<evidence type="ECO:0000255" key="3">
    <source>
        <dbReference type="PROSITE-ProRule" id="PRU00498"/>
    </source>
</evidence>
<evidence type="ECO:0000269" key="4">
    <source>
    </source>
</evidence>
<evidence type="ECO:0000303" key="5">
    <source>
    </source>
</evidence>
<evidence type="ECO:0000305" key="6"/>
<proteinExistence type="evidence at protein level"/>
<name>LIPA_SODAL</name>
<sequence length="416" mass="45645">MRLAPQKPLLLSTVLHLLLSIWMLGFASLAGATVQEPLAASDTPKPVSAALFSSIERLSRLVDITYCVGNTGVWKPFACASRCNEFPTLTLERTWRTGILMSDSCGLIAVDHGTPRHDAGEGKDDPLAEKAIIVAFRGTYSLTNTIIDLSTIPQEYVPYPSPDDGGNEPPREPSHRCDNCTVHSGFLASWRHARKVVLPELKVLRQKYPEYPIRLVGHSLGGAVAMLAALEMRVSLGWRDTVVTTFGEPRVGNRQLCDYLNAVFELNLGDEMDPAEREYRRVTHADDPVPLLPPAEWGYSSHGGEFFISKKDLPPSVEDVLVCHGDHDENCIARGKSSAVSVPAGDYDDALSTLEEQDVMLADALPWIPARLKLWELFFAHRDYFWRLGLCVPGGDPANWGRKGGEGAAESISAEG</sequence>
<protein>
    <recommendedName>
        <fullName evidence="5">Lipase A</fullName>
        <ecNumber evidence="4">3.1.1.3</ecNumber>
        <ecNumber evidence="4">3.1.1.72</ecNumber>
    </recommendedName>
    <alternativeName>
        <fullName>Acetylxylan esterase</fullName>
    </alternativeName>
</protein>
<feature type="signal peptide" evidence="2">
    <location>
        <begin position="1"/>
        <end position="32"/>
    </location>
</feature>
<feature type="chain" id="PRO_0000435968" description="Lipase A">
    <location>
        <begin position="33"/>
        <end position="416"/>
    </location>
</feature>
<feature type="active site" description="Nucleophile" evidence="1">
    <location>
        <position position="219"/>
    </location>
</feature>
<feature type="active site" description="Charge relay system" evidence="1">
    <location>
        <position position="287"/>
    </location>
</feature>
<feature type="active site" description="Charge relay system" evidence="1">
    <location>
        <position position="381"/>
    </location>
</feature>
<feature type="glycosylation site" description="N-linked (GlcNAc...) asparagine" evidence="3">
    <location>
        <position position="179"/>
    </location>
</feature>
<feature type="disulfide bond" evidence="1">
    <location>
        <begin position="67"/>
        <end position="391"/>
    </location>
</feature>
<feature type="disulfide bond" evidence="1">
    <location>
        <begin position="177"/>
        <end position="180"/>
    </location>
</feature>
<dbReference type="EC" id="3.1.1.3" evidence="4"/>
<dbReference type="EC" id="3.1.1.72" evidence="4"/>
<dbReference type="SMR" id="P0CT91"/>
<dbReference type="ESTHER" id="sodal-lipa">
    <property type="family name" value="Lipase_3"/>
</dbReference>
<dbReference type="GlyCosmos" id="P0CT91">
    <property type="glycosylation" value="1 site, No reported glycans"/>
</dbReference>
<dbReference type="GO" id="GO:0005576">
    <property type="term" value="C:extracellular region"/>
    <property type="evidence" value="ECO:0007669"/>
    <property type="project" value="UniProtKB-SubCell"/>
</dbReference>
<dbReference type="GO" id="GO:0046555">
    <property type="term" value="F:acetylxylan esterase activity"/>
    <property type="evidence" value="ECO:0007669"/>
    <property type="project" value="UniProtKB-EC"/>
</dbReference>
<dbReference type="GO" id="GO:0004806">
    <property type="term" value="F:triacylglycerol lipase activity"/>
    <property type="evidence" value="ECO:0007669"/>
    <property type="project" value="UniProtKB-EC"/>
</dbReference>
<dbReference type="GO" id="GO:0016042">
    <property type="term" value="P:lipid catabolic process"/>
    <property type="evidence" value="ECO:0007669"/>
    <property type="project" value="UniProtKB-KW"/>
</dbReference>
<dbReference type="GO" id="GO:0045493">
    <property type="term" value="P:xylan catabolic process"/>
    <property type="evidence" value="ECO:0007669"/>
    <property type="project" value="UniProtKB-KW"/>
</dbReference>
<dbReference type="CDD" id="cd00519">
    <property type="entry name" value="Lipase_3"/>
    <property type="match status" value="1"/>
</dbReference>
<dbReference type="Gene3D" id="3.40.50.1820">
    <property type="entry name" value="alpha/beta hydrolase"/>
    <property type="match status" value="1"/>
</dbReference>
<dbReference type="InterPro" id="IPR029058">
    <property type="entry name" value="AB_hydrolase_fold"/>
</dbReference>
<dbReference type="InterPro" id="IPR051299">
    <property type="entry name" value="AB_hydrolase_lip/est"/>
</dbReference>
<dbReference type="InterPro" id="IPR002921">
    <property type="entry name" value="Fungal_lipase-type"/>
</dbReference>
<dbReference type="PANTHER" id="PTHR46640:SF1">
    <property type="entry name" value="FUNGAL LIPASE-LIKE DOMAIN-CONTAINING PROTEIN-RELATED"/>
    <property type="match status" value="1"/>
</dbReference>
<dbReference type="PANTHER" id="PTHR46640">
    <property type="entry name" value="TRIACYLGLYCEROL LIPASE, PUTATIVE (AFU_ORTHOLOGUE AFUA_6G06510)-RELATED"/>
    <property type="match status" value="1"/>
</dbReference>
<dbReference type="Pfam" id="PF01764">
    <property type="entry name" value="Lipase_3"/>
    <property type="match status" value="1"/>
</dbReference>
<dbReference type="SUPFAM" id="SSF53474">
    <property type="entry name" value="alpha/beta-Hydrolases"/>
    <property type="match status" value="1"/>
</dbReference>
<dbReference type="PROSITE" id="PS00120">
    <property type="entry name" value="LIPASE_SER"/>
    <property type="match status" value="1"/>
</dbReference>
<accession>P0CT91</accession>
<reference key="1">
    <citation type="journal article" date="2013" name="Biotechnol. Biofuels">
        <title>The production and characterization of a new active lipase from Acremonium alcalophilum using a plant bioreactor.</title>
        <authorList>
            <person name="Pereira E.O."/>
            <person name="Tsang A."/>
            <person name="McAllister T.A."/>
            <person name="Menassa R."/>
        </authorList>
    </citation>
    <scope>FUNCTION</scope>
    <scope>CATALYTIC ACTIVITY</scope>
    <scope>BIOPHYSICOCHEMICAL PROPERTIES</scope>
    <scope>GLYCOSYLATION</scope>
    <source>
        <strain>ATCC 90507 / BCRC 33522 / CBS 114.92 / JCM 7366 / KCTC 16719</strain>
    </source>
</reference>
<comment type="function">
    <text evidence="4">Lipolytic enzyme that possesses both lipase and acetylxylan esterase activity. Active towards p-nitrophenol esters of various carbon chain length with preference for medium-chain fatty acids (C-8). Also highly active on the acetylated compounds xylose tetra-acetate and oat spelt xylan.</text>
</comment>
<comment type="catalytic activity">
    <reaction evidence="4">
        <text>Deacetylation of xylans and xylo-oligosaccharides.</text>
        <dbReference type="EC" id="3.1.1.72"/>
    </reaction>
</comment>
<comment type="catalytic activity">
    <reaction evidence="4">
        <text>a triacylglycerol + H2O = a diacylglycerol + a fatty acid + H(+)</text>
        <dbReference type="Rhea" id="RHEA:12044"/>
        <dbReference type="ChEBI" id="CHEBI:15377"/>
        <dbReference type="ChEBI" id="CHEBI:15378"/>
        <dbReference type="ChEBI" id="CHEBI:17855"/>
        <dbReference type="ChEBI" id="CHEBI:18035"/>
        <dbReference type="ChEBI" id="CHEBI:28868"/>
        <dbReference type="EC" id="3.1.1.3"/>
    </reaction>
</comment>
<comment type="biophysicochemical properties">
    <kinetics>
        <KM evidence="4">0.15 mM for p-nitrophenol acetate</KM>
        <KM evidence="4">0.16 mM for p-nitrophenol butyrate</KM>
        <KM evidence="4">0.1 mM for p-nitrophenol caprylate</KM>
        <KM evidence="4">0.07 mM for p-nitrophenol myristate</KM>
        <KM evidence="4">0.1 mM for p-nitrophenol palmitate</KM>
        <Vmax evidence="4">0.24 umol/min/mg enzyme toward p-nitrophenol acetate</Vmax>
        <Vmax evidence="4">4.73 umol/min/mg enzyme toward p-nitrophenol butyrate</Vmax>
        <Vmax evidence="4">9.45 umol/min/mg enzyme toward p-nitrophenol caprylate</Vmax>
        <Vmax evidence="4">3.42 umol/min/mg enzyme toward p-nitrophenol myristate</Vmax>
        <Vmax evidence="4">1.84 umol/min/mg enzyme toward p-nitrophenol palmitate</Vmax>
    </kinetics>
    <phDependence>
        <text evidence="4">Optimum pH is 8.0.</text>
    </phDependence>
    <temperatureDependence>
        <text evidence="4">Optimum temperature is 40 degrees Celsius. Thermostable from 20 to 50 degrees Celsius.</text>
    </temperatureDependence>
</comment>
<comment type="subcellular location">
    <subcellularLocation>
        <location evidence="6">Secreted</location>
    </subcellularLocation>
</comment>
<comment type="PTM">
    <text evidence="4">Glycosylated.</text>
</comment>
<comment type="similarity">
    <text evidence="6">Belongs to the AB hydrolase superfamily. Lipase family.</text>
</comment>
<keyword id="KW-0119">Carbohydrate metabolism</keyword>
<keyword id="KW-1015">Disulfide bond</keyword>
<keyword id="KW-0325">Glycoprotein</keyword>
<keyword id="KW-0378">Hydrolase</keyword>
<keyword id="KW-0442">Lipid degradation</keyword>
<keyword id="KW-0443">Lipid metabolism</keyword>
<keyword id="KW-0624">Polysaccharide degradation</keyword>
<keyword id="KW-0964">Secreted</keyword>
<keyword id="KW-0719">Serine esterase</keyword>
<keyword id="KW-0732">Signal</keyword>
<keyword id="KW-0858">Xylan degradation</keyword>
<organism>
    <name type="scientific">Sodiomyces alcalophilus</name>
    <name type="common">Acremonium alcalophilum</name>
    <dbReference type="NCBI Taxonomy" id="398408"/>
    <lineage>
        <taxon>Eukaryota</taxon>
        <taxon>Fungi</taxon>
        <taxon>Dikarya</taxon>
        <taxon>Ascomycota</taxon>
        <taxon>Pezizomycotina</taxon>
        <taxon>Sordariomycetes</taxon>
        <taxon>Hypocreomycetidae</taxon>
        <taxon>Glomerellales</taxon>
        <taxon>Plectosphaerellaceae</taxon>
        <taxon>Sodiomyces</taxon>
    </lineage>
</organism>
<gene>
    <name evidence="5" type="primary">lipA</name>
    <name type="ORF">fgenesh2_kg.3_#_445_#_Contig6955</name>
</gene>